<organism>
    <name type="scientific">Marinobacter nauticus (strain ATCC 700491 / DSM 11845 / VT8)</name>
    <name type="common">Marinobacter aquaeolei</name>
    <dbReference type="NCBI Taxonomy" id="351348"/>
    <lineage>
        <taxon>Bacteria</taxon>
        <taxon>Pseudomonadati</taxon>
        <taxon>Pseudomonadota</taxon>
        <taxon>Gammaproteobacteria</taxon>
        <taxon>Pseudomonadales</taxon>
        <taxon>Marinobacteraceae</taxon>
        <taxon>Marinobacter</taxon>
    </lineage>
</organism>
<accession>A1TWN4</accession>
<proteinExistence type="inferred from homology"/>
<sequence>MADTSSPSFLQLALARQTVLAGGVIAYPTEAVWGLGCDPWNREAVEYILELKQRPMEKGVILVAASVEQVRFLLDPLPDAVQSEALRHWPGPVTCLLPDVNQQVPEWVRGKHSSIAVRVSDHPVVRALCEATGMPLVSTSCNPAGRQPARAIWQVRRYFGDRIDRIVPGALGGNRKPSRIIDIVTGQQFR</sequence>
<feature type="chain" id="PRO_0000352933" description="Threonylcarbamoyl-AMP synthase">
    <location>
        <begin position="1"/>
        <end position="190"/>
    </location>
</feature>
<feature type="domain" description="YrdC-like" evidence="1">
    <location>
        <begin position="9"/>
        <end position="190"/>
    </location>
</feature>
<protein>
    <recommendedName>
        <fullName evidence="1">Threonylcarbamoyl-AMP synthase</fullName>
        <shortName evidence="1">TC-AMP synthase</shortName>
        <ecNumber evidence="1">2.7.7.87</ecNumber>
    </recommendedName>
    <alternativeName>
        <fullName evidence="1">L-threonylcarbamoyladenylate synthase</fullName>
    </alternativeName>
    <alternativeName>
        <fullName evidence="1">t(6)A37 threonylcarbamoyladenosine biosynthesis protein TsaC</fullName>
    </alternativeName>
    <alternativeName>
        <fullName evidence="1">tRNA threonylcarbamoyladenosine biosynthesis protein TsaC</fullName>
    </alternativeName>
</protein>
<name>TSAC_MARN8</name>
<dbReference type="EC" id="2.7.7.87" evidence="1"/>
<dbReference type="EMBL" id="CP000514">
    <property type="protein sequence ID" value="ABM17153.1"/>
    <property type="molecule type" value="Genomic_DNA"/>
</dbReference>
<dbReference type="RefSeq" id="WP_011783626.1">
    <property type="nucleotide sequence ID" value="NC_008740.1"/>
</dbReference>
<dbReference type="SMR" id="A1TWN4"/>
<dbReference type="STRING" id="351348.Maqu_0046"/>
<dbReference type="KEGG" id="maq:Maqu_0046"/>
<dbReference type="eggNOG" id="COG0009">
    <property type="taxonomic scope" value="Bacteria"/>
</dbReference>
<dbReference type="HOGENOM" id="CLU_031397_6_0_6"/>
<dbReference type="OrthoDB" id="9814580at2"/>
<dbReference type="Proteomes" id="UP000000998">
    <property type="component" value="Chromosome"/>
</dbReference>
<dbReference type="GO" id="GO:0005737">
    <property type="term" value="C:cytoplasm"/>
    <property type="evidence" value="ECO:0007669"/>
    <property type="project" value="UniProtKB-SubCell"/>
</dbReference>
<dbReference type="GO" id="GO:0005524">
    <property type="term" value="F:ATP binding"/>
    <property type="evidence" value="ECO:0007669"/>
    <property type="project" value="UniProtKB-UniRule"/>
</dbReference>
<dbReference type="GO" id="GO:0003725">
    <property type="term" value="F:double-stranded RNA binding"/>
    <property type="evidence" value="ECO:0007669"/>
    <property type="project" value="InterPro"/>
</dbReference>
<dbReference type="GO" id="GO:0061710">
    <property type="term" value="F:L-threonylcarbamoyladenylate synthase"/>
    <property type="evidence" value="ECO:0007669"/>
    <property type="project" value="UniProtKB-EC"/>
</dbReference>
<dbReference type="GO" id="GO:0000049">
    <property type="term" value="F:tRNA binding"/>
    <property type="evidence" value="ECO:0007669"/>
    <property type="project" value="TreeGrafter"/>
</dbReference>
<dbReference type="GO" id="GO:0006450">
    <property type="term" value="P:regulation of translational fidelity"/>
    <property type="evidence" value="ECO:0007669"/>
    <property type="project" value="TreeGrafter"/>
</dbReference>
<dbReference type="GO" id="GO:0002949">
    <property type="term" value="P:tRNA threonylcarbamoyladenosine modification"/>
    <property type="evidence" value="ECO:0007669"/>
    <property type="project" value="UniProtKB-UniRule"/>
</dbReference>
<dbReference type="FunFam" id="3.90.870.10:FF:000004">
    <property type="entry name" value="Threonylcarbamoyl-AMP synthase"/>
    <property type="match status" value="1"/>
</dbReference>
<dbReference type="Gene3D" id="3.90.870.10">
    <property type="entry name" value="DHBP synthase"/>
    <property type="match status" value="1"/>
</dbReference>
<dbReference type="HAMAP" id="MF_01852">
    <property type="entry name" value="TsaC"/>
    <property type="match status" value="1"/>
</dbReference>
<dbReference type="InterPro" id="IPR017945">
    <property type="entry name" value="DHBP_synth_RibB-like_a/b_dom"/>
</dbReference>
<dbReference type="InterPro" id="IPR006070">
    <property type="entry name" value="Sua5-like_dom"/>
</dbReference>
<dbReference type="InterPro" id="IPR023535">
    <property type="entry name" value="TC-AMP_synthase"/>
</dbReference>
<dbReference type="InterPro" id="IPR050156">
    <property type="entry name" value="TC-AMP_synthase_SUA5"/>
</dbReference>
<dbReference type="PANTHER" id="PTHR17490">
    <property type="entry name" value="SUA5"/>
    <property type="match status" value="1"/>
</dbReference>
<dbReference type="PANTHER" id="PTHR17490:SF18">
    <property type="entry name" value="THREONYLCARBAMOYL-AMP SYNTHASE"/>
    <property type="match status" value="1"/>
</dbReference>
<dbReference type="Pfam" id="PF01300">
    <property type="entry name" value="Sua5_yciO_yrdC"/>
    <property type="match status" value="1"/>
</dbReference>
<dbReference type="SUPFAM" id="SSF55821">
    <property type="entry name" value="YrdC/RibB"/>
    <property type="match status" value="1"/>
</dbReference>
<dbReference type="PROSITE" id="PS51163">
    <property type="entry name" value="YRDC"/>
    <property type="match status" value="1"/>
</dbReference>
<gene>
    <name evidence="1" type="primary">tsaC</name>
    <name type="synonym">rimN</name>
    <name type="ordered locus">Maqu_0046</name>
</gene>
<comment type="function">
    <text evidence="1">Required for the formation of a threonylcarbamoyl group on adenosine at position 37 (t(6)A37) in tRNAs that read codons beginning with adenine. Catalyzes the conversion of L-threonine, HCO(3)(-)/CO(2) and ATP to give threonylcarbamoyl-AMP (TC-AMP) as the acyladenylate intermediate, with the release of diphosphate.</text>
</comment>
<comment type="catalytic activity">
    <reaction evidence="1">
        <text>L-threonine + hydrogencarbonate + ATP = L-threonylcarbamoyladenylate + diphosphate + H2O</text>
        <dbReference type="Rhea" id="RHEA:36407"/>
        <dbReference type="ChEBI" id="CHEBI:15377"/>
        <dbReference type="ChEBI" id="CHEBI:17544"/>
        <dbReference type="ChEBI" id="CHEBI:30616"/>
        <dbReference type="ChEBI" id="CHEBI:33019"/>
        <dbReference type="ChEBI" id="CHEBI:57926"/>
        <dbReference type="ChEBI" id="CHEBI:73682"/>
        <dbReference type="EC" id="2.7.7.87"/>
    </reaction>
</comment>
<comment type="subcellular location">
    <subcellularLocation>
        <location evidence="1">Cytoplasm</location>
    </subcellularLocation>
</comment>
<comment type="similarity">
    <text evidence="1">Belongs to the SUA5 family. TsaC subfamily.</text>
</comment>
<reference key="1">
    <citation type="journal article" date="2011" name="Appl. Environ. Microbiol.">
        <title>Genomic potential of Marinobacter aquaeolei, a biogeochemical 'opportunitroph'.</title>
        <authorList>
            <person name="Singer E."/>
            <person name="Webb E.A."/>
            <person name="Nelson W.C."/>
            <person name="Heidelberg J.F."/>
            <person name="Ivanova N."/>
            <person name="Pati A."/>
            <person name="Edwards K.J."/>
        </authorList>
    </citation>
    <scope>NUCLEOTIDE SEQUENCE [LARGE SCALE GENOMIC DNA]</scope>
    <source>
        <strain>ATCC 700491 / DSM 11845 / VT8</strain>
    </source>
</reference>
<evidence type="ECO:0000255" key="1">
    <source>
        <dbReference type="HAMAP-Rule" id="MF_01852"/>
    </source>
</evidence>
<keyword id="KW-0067">ATP-binding</keyword>
<keyword id="KW-0963">Cytoplasm</keyword>
<keyword id="KW-0547">Nucleotide-binding</keyword>
<keyword id="KW-0548">Nucleotidyltransferase</keyword>
<keyword id="KW-0808">Transferase</keyword>
<keyword id="KW-0819">tRNA processing</keyword>